<sequence>MPSFDIVSEVDLQEARNAVDNASREVESRFDFRNVEASFELNDASKTIKVLSESDFQVNQLLDILRAKLLKRGIEGSSLDVPENIVHSGKTWFVEAKLKQGIESATQKKIVKMIKDSKLKVQAQIQGDEIRVTGKSRDDLQAVMAMVRGSDLGQPFQFKNFRD</sequence>
<name>YAJQ_ECO81</name>
<evidence type="ECO:0000255" key="1">
    <source>
        <dbReference type="HAMAP-Rule" id="MF_00632"/>
    </source>
</evidence>
<accession>B7MQE1</accession>
<gene>
    <name evidence="1" type="primary">yajQ</name>
    <name type="ordered locus">ECED1_0449</name>
</gene>
<feature type="chain" id="PRO_1000147305" description="Nucleotide-binding protein YajQ">
    <location>
        <begin position="1"/>
        <end position="163"/>
    </location>
</feature>
<comment type="function">
    <text evidence="1">Nucleotide-binding protein.</text>
</comment>
<comment type="similarity">
    <text evidence="1">Belongs to the YajQ family.</text>
</comment>
<protein>
    <recommendedName>
        <fullName evidence="1">Nucleotide-binding protein YajQ</fullName>
    </recommendedName>
</protein>
<proteinExistence type="inferred from homology"/>
<reference key="1">
    <citation type="journal article" date="2009" name="PLoS Genet.">
        <title>Organised genome dynamics in the Escherichia coli species results in highly diverse adaptive paths.</title>
        <authorList>
            <person name="Touchon M."/>
            <person name="Hoede C."/>
            <person name="Tenaillon O."/>
            <person name="Barbe V."/>
            <person name="Baeriswyl S."/>
            <person name="Bidet P."/>
            <person name="Bingen E."/>
            <person name="Bonacorsi S."/>
            <person name="Bouchier C."/>
            <person name="Bouvet O."/>
            <person name="Calteau A."/>
            <person name="Chiapello H."/>
            <person name="Clermont O."/>
            <person name="Cruveiller S."/>
            <person name="Danchin A."/>
            <person name="Diard M."/>
            <person name="Dossat C."/>
            <person name="Karoui M.E."/>
            <person name="Frapy E."/>
            <person name="Garry L."/>
            <person name="Ghigo J.M."/>
            <person name="Gilles A.M."/>
            <person name="Johnson J."/>
            <person name="Le Bouguenec C."/>
            <person name="Lescat M."/>
            <person name="Mangenot S."/>
            <person name="Martinez-Jehanne V."/>
            <person name="Matic I."/>
            <person name="Nassif X."/>
            <person name="Oztas S."/>
            <person name="Petit M.A."/>
            <person name="Pichon C."/>
            <person name="Rouy Z."/>
            <person name="Ruf C.S."/>
            <person name="Schneider D."/>
            <person name="Tourret J."/>
            <person name="Vacherie B."/>
            <person name="Vallenet D."/>
            <person name="Medigue C."/>
            <person name="Rocha E.P.C."/>
            <person name="Denamur E."/>
        </authorList>
    </citation>
    <scope>NUCLEOTIDE SEQUENCE [LARGE SCALE GENOMIC DNA]</scope>
    <source>
        <strain>ED1a</strain>
    </source>
</reference>
<dbReference type="EMBL" id="CU928162">
    <property type="protein sequence ID" value="CAR06659.1"/>
    <property type="molecule type" value="Genomic_DNA"/>
</dbReference>
<dbReference type="RefSeq" id="WP_001138905.1">
    <property type="nucleotide sequence ID" value="NC_011745.1"/>
</dbReference>
<dbReference type="SMR" id="B7MQE1"/>
<dbReference type="KEGG" id="ecq:ECED1_0449"/>
<dbReference type="HOGENOM" id="CLU_099839_1_0_6"/>
<dbReference type="Proteomes" id="UP000000748">
    <property type="component" value="Chromosome"/>
</dbReference>
<dbReference type="GO" id="GO:0005829">
    <property type="term" value="C:cytosol"/>
    <property type="evidence" value="ECO:0007669"/>
    <property type="project" value="TreeGrafter"/>
</dbReference>
<dbReference type="GO" id="GO:0000166">
    <property type="term" value="F:nucleotide binding"/>
    <property type="evidence" value="ECO:0007669"/>
    <property type="project" value="TreeGrafter"/>
</dbReference>
<dbReference type="CDD" id="cd11740">
    <property type="entry name" value="YajQ_like"/>
    <property type="match status" value="1"/>
</dbReference>
<dbReference type="FunFam" id="3.30.70.860:FF:000001">
    <property type="entry name" value="UPF0234 protein YajQ"/>
    <property type="match status" value="1"/>
</dbReference>
<dbReference type="FunFam" id="3.30.70.990:FF:000001">
    <property type="entry name" value="UPF0234 protein YajQ"/>
    <property type="match status" value="1"/>
</dbReference>
<dbReference type="Gene3D" id="3.30.70.860">
    <property type="match status" value="1"/>
</dbReference>
<dbReference type="Gene3D" id="3.30.70.990">
    <property type="entry name" value="YajQ-like, domain 2"/>
    <property type="match status" value="1"/>
</dbReference>
<dbReference type="HAMAP" id="MF_00632">
    <property type="entry name" value="YajQ"/>
    <property type="match status" value="1"/>
</dbReference>
<dbReference type="InterPro" id="IPR007551">
    <property type="entry name" value="DUF520"/>
</dbReference>
<dbReference type="InterPro" id="IPR035571">
    <property type="entry name" value="UPF0234-like_C"/>
</dbReference>
<dbReference type="InterPro" id="IPR035570">
    <property type="entry name" value="UPF0234_N"/>
</dbReference>
<dbReference type="InterPro" id="IPR036183">
    <property type="entry name" value="YajQ-like_sf"/>
</dbReference>
<dbReference type="NCBIfam" id="NF003819">
    <property type="entry name" value="PRK05412.1"/>
    <property type="match status" value="1"/>
</dbReference>
<dbReference type="PANTHER" id="PTHR30476">
    <property type="entry name" value="UPF0234 PROTEIN YAJQ"/>
    <property type="match status" value="1"/>
</dbReference>
<dbReference type="PANTHER" id="PTHR30476:SF0">
    <property type="entry name" value="UPF0234 PROTEIN YAJQ"/>
    <property type="match status" value="1"/>
</dbReference>
<dbReference type="Pfam" id="PF04461">
    <property type="entry name" value="DUF520"/>
    <property type="match status" value="1"/>
</dbReference>
<dbReference type="SUPFAM" id="SSF89963">
    <property type="entry name" value="YajQ-like"/>
    <property type="match status" value="2"/>
</dbReference>
<keyword id="KW-0547">Nucleotide-binding</keyword>
<organism>
    <name type="scientific">Escherichia coli O81 (strain ED1a)</name>
    <dbReference type="NCBI Taxonomy" id="585397"/>
    <lineage>
        <taxon>Bacteria</taxon>
        <taxon>Pseudomonadati</taxon>
        <taxon>Pseudomonadota</taxon>
        <taxon>Gammaproteobacteria</taxon>
        <taxon>Enterobacterales</taxon>
        <taxon>Enterobacteriaceae</taxon>
        <taxon>Escherichia</taxon>
    </lineage>
</organism>